<comment type="function">
    <text evidence="1">Catalyzes the phosphorylation of pantothenate (Pan), the first step in CoA biosynthesis.</text>
</comment>
<comment type="catalytic activity">
    <reaction evidence="1">
        <text>(R)-pantothenate + ATP = (R)-4'-phosphopantothenate + ADP + H(+)</text>
        <dbReference type="Rhea" id="RHEA:16373"/>
        <dbReference type="ChEBI" id="CHEBI:10986"/>
        <dbReference type="ChEBI" id="CHEBI:15378"/>
        <dbReference type="ChEBI" id="CHEBI:29032"/>
        <dbReference type="ChEBI" id="CHEBI:30616"/>
        <dbReference type="ChEBI" id="CHEBI:456216"/>
        <dbReference type="EC" id="2.7.1.33"/>
    </reaction>
</comment>
<comment type="cofactor">
    <cofactor evidence="1">
        <name>NH4(+)</name>
        <dbReference type="ChEBI" id="CHEBI:28938"/>
    </cofactor>
    <cofactor evidence="1">
        <name>K(+)</name>
        <dbReference type="ChEBI" id="CHEBI:29103"/>
    </cofactor>
    <text evidence="1">A monovalent cation. Ammonium or potassium.</text>
</comment>
<comment type="pathway">
    <text evidence="1">Cofactor biosynthesis; coenzyme A biosynthesis; CoA from (R)-pantothenate: step 1/5.</text>
</comment>
<comment type="subunit">
    <text evidence="1">Homodimer.</text>
</comment>
<comment type="subcellular location">
    <subcellularLocation>
        <location evidence="1">Cytoplasm</location>
    </subcellularLocation>
</comment>
<comment type="similarity">
    <text evidence="1">Belongs to the type III pantothenate kinase family.</text>
</comment>
<protein>
    <recommendedName>
        <fullName evidence="1">Type III pantothenate kinase</fullName>
        <ecNumber evidence="1">2.7.1.33</ecNumber>
    </recommendedName>
    <alternativeName>
        <fullName evidence="1">PanK-III</fullName>
    </alternativeName>
    <alternativeName>
        <fullName evidence="1">Pantothenic acid kinase</fullName>
    </alternativeName>
</protein>
<organism>
    <name type="scientific">Alkaliphilus oremlandii (strain OhILAs)</name>
    <name type="common">Clostridium oremlandii (strain OhILAs)</name>
    <dbReference type="NCBI Taxonomy" id="350688"/>
    <lineage>
        <taxon>Bacteria</taxon>
        <taxon>Bacillati</taxon>
        <taxon>Bacillota</taxon>
        <taxon>Clostridia</taxon>
        <taxon>Peptostreptococcales</taxon>
        <taxon>Natronincolaceae</taxon>
        <taxon>Alkaliphilus</taxon>
    </lineage>
</organism>
<sequence length="265" mass="29076">MILVFDVGNTNIVLGVYRGKELIENWRIATDKDKSSDEYAMVIHQFFHYNGLNIHDVDDVIISSVVPNIMYSLENASRKLFKREPLIVGSGIKTGMNIKYDDPKQVGADRIVNAIAAYEKYGGPLIIVDFGTATTFCAVSEDGEYLGGAISPGIKISSEALFEKAAKLPRVELINPKKVICKNTVSSMQAGIVYGYIGLVENIVRNMKKELKSSSCKVIATGGLSTLIAGGTDSIDVVDKFLSLDGLNIIYERNRKDRILSNKKS</sequence>
<keyword id="KW-0067">ATP-binding</keyword>
<keyword id="KW-0173">Coenzyme A biosynthesis</keyword>
<keyword id="KW-0963">Cytoplasm</keyword>
<keyword id="KW-0418">Kinase</keyword>
<keyword id="KW-0479">Metal-binding</keyword>
<keyword id="KW-0547">Nucleotide-binding</keyword>
<keyword id="KW-0630">Potassium</keyword>
<keyword id="KW-1185">Reference proteome</keyword>
<keyword id="KW-0808">Transferase</keyword>
<accession>A8MLU1</accession>
<reference key="1">
    <citation type="submission" date="2007-10" db="EMBL/GenBank/DDBJ databases">
        <title>Complete genome of Alkaliphilus oremlandii OhILAs.</title>
        <authorList>
            <person name="Copeland A."/>
            <person name="Lucas S."/>
            <person name="Lapidus A."/>
            <person name="Barry K."/>
            <person name="Detter J.C."/>
            <person name="Glavina del Rio T."/>
            <person name="Hammon N."/>
            <person name="Israni S."/>
            <person name="Dalin E."/>
            <person name="Tice H."/>
            <person name="Pitluck S."/>
            <person name="Chain P."/>
            <person name="Malfatti S."/>
            <person name="Shin M."/>
            <person name="Vergez L."/>
            <person name="Schmutz J."/>
            <person name="Larimer F."/>
            <person name="Land M."/>
            <person name="Hauser L."/>
            <person name="Kyrpides N."/>
            <person name="Mikhailova N."/>
            <person name="Stolz J.F."/>
            <person name="Dawson A."/>
            <person name="Fisher E."/>
            <person name="Crable B."/>
            <person name="Perera E."/>
            <person name="Lisak J."/>
            <person name="Ranganathan M."/>
            <person name="Basu P."/>
            <person name="Richardson P."/>
        </authorList>
    </citation>
    <scope>NUCLEOTIDE SEQUENCE [LARGE SCALE GENOMIC DNA]</scope>
    <source>
        <strain>OhILAs</strain>
    </source>
</reference>
<proteinExistence type="inferred from homology"/>
<feature type="chain" id="PRO_1000067386" description="Type III pantothenate kinase">
    <location>
        <begin position="1"/>
        <end position="265"/>
    </location>
</feature>
<feature type="active site" description="Proton acceptor" evidence="1">
    <location>
        <position position="109"/>
    </location>
</feature>
<feature type="binding site" evidence="1">
    <location>
        <begin position="6"/>
        <end position="13"/>
    </location>
    <ligand>
        <name>ATP</name>
        <dbReference type="ChEBI" id="CHEBI:30616"/>
    </ligand>
</feature>
<feature type="binding site" evidence="1">
    <location>
        <position position="100"/>
    </location>
    <ligand>
        <name>substrate</name>
    </ligand>
</feature>
<feature type="binding site" evidence="1">
    <location>
        <begin position="107"/>
        <end position="110"/>
    </location>
    <ligand>
        <name>substrate</name>
    </ligand>
</feature>
<feature type="binding site" evidence="1">
    <location>
        <position position="129"/>
    </location>
    <ligand>
        <name>K(+)</name>
        <dbReference type="ChEBI" id="CHEBI:29103"/>
    </ligand>
</feature>
<feature type="binding site" evidence="1">
    <location>
        <position position="132"/>
    </location>
    <ligand>
        <name>ATP</name>
        <dbReference type="ChEBI" id="CHEBI:30616"/>
    </ligand>
</feature>
<feature type="binding site" evidence="1">
    <location>
        <position position="184"/>
    </location>
    <ligand>
        <name>substrate</name>
    </ligand>
</feature>
<gene>
    <name evidence="1" type="primary">coaX</name>
    <name type="ordered locus">Clos_0446</name>
</gene>
<name>COAX_ALKOO</name>
<evidence type="ECO:0000255" key="1">
    <source>
        <dbReference type="HAMAP-Rule" id="MF_01274"/>
    </source>
</evidence>
<dbReference type="EC" id="2.7.1.33" evidence="1"/>
<dbReference type="EMBL" id="CP000853">
    <property type="protein sequence ID" value="ABW18008.1"/>
    <property type="molecule type" value="Genomic_DNA"/>
</dbReference>
<dbReference type="RefSeq" id="WP_012158323.1">
    <property type="nucleotide sequence ID" value="NC_009922.1"/>
</dbReference>
<dbReference type="SMR" id="A8MLU1"/>
<dbReference type="STRING" id="350688.Clos_0446"/>
<dbReference type="KEGG" id="aoe:Clos_0446"/>
<dbReference type="eggNOG" id="COG1521">
    <property type="taxonomic scope" value="Bacteria"/>
</dbReference>
<dbReference type="HOGENOM" id="CLU_066627_1_0_9"/>
<dbReference type="OrthoDB" id="9804707at2"/>
<dbReference type="UniPathway" id="UPA00241">
    <property type="reaction ID" value="UER00352"/>
</dbReference>
<dbReference type="Proteomes" id="UP000000269">
    <property type="component" value="Chromosome"/>
</dbReference>
<dbReference type="GO" id="GO:0005737">
    <property type="term" value="C:cytoplasm"/>
    <property type="evidence" value="ECO:0007669"/>
    <property type="project" value="UniProtKB-SubCell"/>
</dbReference>
<dbReference type="GO" id="GO:0005524">
    <property type="term" value="F:ATP binding"/>
    <property type="evidence" value="ECO:0007669"/>
    <property type="project" value="UniProtKB-UniRule"/>
</dbReference>
<dbReference type="GO" id="GO:0046872">
    <property type="term" value="F:metal ion binding"/>
    <property type="evidence" value="ECO:0007669"/>
    <property type="project" value="UniProtKB-KW"/>
</dbReference>
<dbReference type="GO" id="GO:0004594">
    <property type="term" value="F:pantothenate kinase activity"/>
    <property type="evidence" value="ECO:0007669"/>
    <property type="project" value="UniProtKB-UniRule"/>
</dbReference>
<dbReference type="GO" id="GO:0015937">
    <property type="term" value="P:coenzyme A biosynthetic process"/>
    <property type="evidence" value="ECO:0007669"/>
    <property type="project" value="UniProtKB-UniRule"/>
</dbReference>
<dbReference type="CDD" id="cd24015">
    <property type="entry name" value="ASKHA_NBD_PanK-III"/>
    <property type="match status" value="1"/>
</dbReference>
<dbReference type="Gene3D" id="3.30.420.40">
    <property type="match status" value="2"/>
</dbReference>
<dbReference type="HAMAP" id="MF_01274">
    <property type="entry name" value="Pantothen_kinase_3"/>
    <property type="match status" value="1"/>
</dbReference>
<dbReference type="InterPro" id="IPR043129">
    <property type="entry name" value="ATPase_NBD"/>
</dbReference>
<dbReference type="InterPro" id="IPR004619">
    <property type="entry name" value="Type_III_PanK"/>
</dbReference>
<dbReference type="NCBIfam" id="TIGR00671">
    <property type="entry name" value="baf"/>
    <property type="match status" value="1"/>
</dbReference>
<dbReference type="NCBIfam" id="NF009847">
    <property type="entry name" value="PRK13318.1-5"/>
    <property type="match status" value="1"/>
</dbReference>
<dbReference type="NCBIfam" id="NF009848">
    <property type="entry name" value="PRK13318.1-6"/>
    <property type="match status" value="1"/>
</dbReference>
<dbReference type="NCBIfam" id="NF009855">
    <property type="entry name" value="PRK13321.1"/>
    <property type="match status" value="1"/>
</dbReference>
<dbReference type="PANTHER" id="PTHR34265">
    <property type="entry name" value="TYPE III PANTOTHENATE KINASE"/>
    <property type="match status" value="1"/>
</dbReference>
<dbReference type="PANTHER" id="PTHR34265:SF1">
    <property type="entry name" value="TYPE III PANTOTHENATE KINASE"/>
    <property type="match status" value="1"/>
</dbReference>
<dbReference type="Pfam" id="PF03309">
    <property type="entry name" value="Pan_kinase"/>
    <property type="match status" value="1"/>
</dbReference>
<dbReference type="SUPFAM" id="SSF53067">
    <property type="entry name" value="Actin-like ATPase domain"/>
    <property type="match status" value="2"/>
</dbReference>